<comment type="catalytic activity">
    <reaction evidence="5">
        <text>L-tyrosyl-[protein] + ATP = O-phospho-L-tyrosyl-[protein] + ADP + H(+)</text>
        <dbReference type="Rhea" id="RHEA:10596"/>
        <dbReference type="Rhea" id="RHEA-COMP:10136"/>
        <dbReference type="Rhea" id="RHEA-COMP:20101"/>
        <dbReference type="ChEBI" id="CHEBI:15378"/>
        <dbReference type="ChEBI" id="CHEBI:30616"/>
        <dbReference type="ChEBI" id="CHEBI:46858"/>
        <dbReference type="ChEBI" id="CHEBI:61978"/>
        <dbReference type="ChEBI" id="CHEBI:456216"/>
        <dbReference type="EC" id="2.7.10.1"/>
    </reaction>
</comment>
<comment type="subcellular location">
    <subcellularLocation>
        <location evidence="1">Cell membrane</location>
        <topology evidence="1">Single-pass type I membrane protein</topology>
    </subcellularLocation>
</comment>
<comment type="similarity">
    <text evidence="4">Belongs to the protein kinase superfamily. Tyr protein kinase family.</text>
</comment>
<comment type="online information" name="Arabidopsis protein tyrosine kinases">
    <link uri="http://www.bio.unipd.it/molbinfo/PTKtable.html"/>
</comment>
<feature type="signal peptide" evidence="2">
    <location>
        <begin position="1"/>
        <end position="27"/>
    </location>
</feature>
<feature type="chain" id="PRO_0000403327" description="C-type lectin receptor-like tyrosine-protein kinase At1g52310">
    <location>
        <begin position="28"/>
        <end position="552"/>
    </location>
</feature>
<feature type="topological domain" description="Extracellular" evidence="2">
    <location>
        <begin position="28"/>
        <end position="201"/>
    </location>
</feature>
<feature type="transmembrane region" description="Helical" evidence="2">
    <location>
        <begin position="202"/>
        <end position="222"/>
    </location>
</feature>
<feature type="topological domain" description="Cytoplasmic" evidence="2">
    <location>
        <begin position="223"/>
        <end position="552"/>
    </location>
</feature>
<feature type="domain" description="C-type lectin" evidence="3">
    <location>
        <begin position="59"/>
        <end position="188"/>
    </location>
</feature>
<feature type="domain" description="Protein kinase" evidence="4">
    <location>
        <begin position="268"/>
        <end position="546"/>
    </location>
</feature>
<feature type="active site" description="Proton acceptor" evidence="4 5">
    <location>
        <position position="394"/>
    </location>
</feature>
<feature type="binding site" evidence="4">
    <location>
        <begin position="274"/>
        <end position="282"/>
    </location>
    <ligand>
        <name>ATP</name>
        <dbReference type="ChEBI" id="CHEBI:30616"/>
    </ligand>
</feature>
<feature type="binding site" evidence="4">
    <location>
        <position position="296"/>
    </location>
    <ligand>
        <name>ATP</name>
        <dbReference type="ChEBI" id="CHEBI:30616"/>
    </ligand>
</feature>
<feature type="glycosylation site" description="N-linked (GlcNAc...) asparagine" evidence="2">
    <location>
        <position position="37"/>
    </location>
</feature>
<feature type="glycosylation site" description="N-linked (GlcNAc...) asparagine" evidence="2">
    <location>
        <position position="59"/>
    </location>
</feature>
<feature type="glycosylation site" description="N-linked (GlcNAc...) asparagine" evidence="2">
    <location>
        <position position="69"/>
    </location>
</feature>
<feature type="glycosylation site" description="N-linked (GlcNAc...) asparagine" evidence="2">
    <location>
        <position position="106"/>
    </location>
</feature>
<feature type="glycosylation site" description="N-linked (GlcNAc...) asparagine" evidence="2">
    <location>
        <position position="118"/>
    </location>
</feature>
<feature type="glycosylation site" description="N-linked (GlcNAc...) asparagine" evidence="2">
    <location>
        <position position="137"/>
    </location>
</feature>
<feature type="glycosylation site" description="N-linked (GlcNAc...) asparagine" evidence="2">
    <location>
        <position position="154"/>
    </location>
</feature>
<feature type="glycosylation site" description="N-linked (GlcNAc...) asparagine" evidence="2">
    <location>
        <position position="169"/>
    </location>
</feature>
<feature type="glycosylation site" description="N-linked (GlcNAc...) asparagine" evidence="2">
    <location>
        <position position="180"/>
    </location>
</feature>
<feature type="disulfide bond" evidence="3">
    <location>
        <begin position="80"/>
        <end position="187"/>
    </location>
</feature>
<feature type="disulfide bond" evidence="3">
    <location>
        <begin position="164"/>
        <end position="179"/>
    </location>
</feature>
<reference key="1">
    <citation type="journal article" date="2000" name="Nature">
        <title>Sequence and analysis of chromosome 1 of the plant Arabidopsis thaliana.</title>
        <authorList>
            <person name="Theologis A."/>
            <person name="Ecker J.R."/>
            <person name="Palm C.J."/>
            <person name="Federspiel N.A."/>
            <person name="Kaul S."/>
            <person name="White O."/>
            <person name="Alonso J."/>
            <person name="Altafi H."/>
            <person name="Araujo R."/>
            <person name="Bowman C.L."/>
            <person name="Brooks S.Y."/>
            <person name="Buehler E."/>
            <person name="Chan A."/>
            <person name="Chao Q."/>
            <person name="Chen H."/>
            <person name="Cheuk R.F."/>
            <person name="Chin C.W."/>
            <person name="Chung M.K."/>
            <person name="Conn L."/>
            <person name="Conway A.B."/>
            <person name="Conway A.R."/>
            <person name="Creasy T.H."/>
            <person name="Dewar K."/>
            <person name="Dunn P."/>
            <person name="Etgu P."/>
            <person name="Feldblyum T.V."/>
            <person name="Feng J.-D."/>
            <person name="Fong B."/>
            <person name="Fujii C.Y."/>
            <person name="Gill J.E."/>
            <person name="Goldsmith A.D."/>
            <person name="Haas B."/>
            <person name="Hansen N.F."/>
            <person name="Hughes B."/>
            <person name="Huizar L."/>
            <person name="Hunter J.L."/>
            <person name="Jenkins J."/>
            <person name="Johnson-Hopson C."/>
            <person name="Khan S."/>
            <person name="Khaykin E."/>
            <person name="Kim C.J."/>
            <person name="Koo H.L."/>
            <person name="Kremenetskaia I."/>
            <person name="Kurtz D.B."/>
            <person name="Kwan A."/>
            <person name="Lam B."/>
            <person name="Langin-Hooper S."/>
            <person name="Lee A."/>
            <person name="Lee J.M."/>
            <person name="Lenz C.A."/>
            <person name="Li J.H."/>
            <person name="Li Y.-P."/>
            <person name="Lin X."/>
            <person name="Liu S.X."/>
            <person name="Liu Z.A."/>
            <person name="Luros J.S."/>
            <person name="Maiti R."/>
            <person name="Marziali A."/>
            <person name="Militscher J."/>
            <person name="Miranda M."/>
            <person name="Nguyen M."/>
            <person name="Nierman W.C."/>
            <person name="Osborne B.I."/>
            <person name="Pai G."/>
            <person name="Peterson J."/>
            <person name="Pham P.K."/>
            <person name="Rizzo M."/>
            <person name="Rooney T."/>
            <person name="Rowley D."/>
            <person name="Sakano H."/>
            <person name="Salzberg S.L."/>
            <person name="Schwartz J.R."/>
            <person name="Shinn P."/>
            <person name="Southwick A.M."/>
            <person name="Sun H."/>
            <person name="Tallon L.J."/>
            <person name="Tambunga G."/>
            <person name="Toriumi M.J."/>
            <person name="Town C.D."/>
            <person name="Utterback T."/>
            <person name="Van Aken S."/>
            <person name="Vaysberg M."/>
            <person name="Vysotskaia V.S."/>
            <person name="Walker M."/>
            <person name="Wu D."/>
            <person name="Yu G."/>
            <person name="Fraser C.M."/>
            <person name="Venter J.C."/>
            <person name="Davis R.W."/>
        </authorList>
    </citation>
    <scope>NUCLEOTIDE SEQUENCE [LARGE SCALE GENOMIC DNA]</scope>
    <source>
        <strain>cv. Columbia</strain>
    </source>
</reference>
<reference key="2">
    <citation type="journal article" date="2017" name="Plant J.">
        <title>Araport11: a complete reannotation of the Arabidopsis thaliana reference genome.</title>
        <authorList>
            <person name="Cheng C.Y."/>
            <person name="Krishnakumar V."/>
            <person name="Chan A.P."/>
            <person name="Thibaud-Nissen F."/>
            <person name="Schobel S."/>
            <person name="Town C.D."/>
        </authorList>
    </citation>
    <scope>GENOME REANNOTATION</scope>
    <source>
        <strain>cv. Columbia</strain>
    </source>
</reference>
<reference key="3">
    <citation type="journal article" date="2003" name="Science">
        <title>Empirical analysis of transcriptional activity in the Arabidopsis genome.</title>
        <authorList>
            <person name="Yamada K."/>
            <person name="Lim J."/>
            <person name="Dale J.M."/>
            <person name="Chen H."/>
            <person name="Shinn P."/>
            <person name="Palm C.J."/>
            <person name="Southwick A.M."/>
            <person name="Wu H.C."/>
            <person name="Kim C.J."/>
            <person name="Nguyen M."/>
            <person name="Pham P.K."/>
            <person name="Cheuk R.F."/>
            <person name="Karlin-Newmann G."/>
            <person name="Liu S.X."/>
            <person name="Lam B."/>
            <person name="Sakano H."/>
            <person name="Wu T."/>
            <person name="Yu G."/>
            <person name="Miranda M."/>
            <person name="Quach H.L."/>
            <person name="Tripp M."/>
            <person name="Chang C.H."/>
            <person name="Lee J.M."/>
            <person name="Toriumi M.J."/>
            <person name="Chan M.M."/>
            <person name="Tang C.C."/>
            <person name="Onodera C.S."/>
            <person name="Deng J.M."/>
            <person name="Akiyama K."/>
            <person name="Ansari Y."/>
            <person name="Arakawa T."/>
            <person name="Banh J."/>
            <person name="Banno F."/>
            <person name="Bowser L."/>
            <person name="Brooks S.Y."/>
            <person name="Carninci P."/>
            <person name="Chao Q."/>
            <person name="Choy N."/>
            <person name="Enju A."/>
            <person name="Goldsmith A.D."/>
            <person name="Gurjal M."/>
            <person name="Hansen N.F."/>
            <person name="Hayashizaki Y."/>
            <person name="Johnson-Hopson C."/>
            <person name="Hsuan V.W."/>
            <person name="Iida K."/>
            <person name="Karnes M."/>
            <person name="Khan S."/>
            <person name="Koesema E."/>
            <person name="Ishida J."/>
            <person name="Jiang P.X."/>
            <person name="Jones T."/>
            <person name="Kawai J."/>
            <person name="Kamiya A."/>
            <person name="Meyers C."/>
            <person name="Nakajima M."/>
            <person name="Narusaka M."/>
            <person name="Seki M."/>
            <person name="Sakurai T."/>
            <person name="Satou M."/>
            <person name="Tamse R."/>
            <person name="Vaysberg M."/>
            <person name="Wallender E.K."/>
            <person name="Wong C."/>
            <person name="Yamamura Y."/>
            <person name="Yuan S."/>
            <person name="Shinozaki K."/>
            <person name="Davis R.W."/>
            <person name="Theologis A."/>
            <person name="Ecker J.R."/>
        </authorList>
    </citation>
    <scope>NUCLEOTIDE SEQUENCE [LARGE SCALE MRNA]</scope>
    <source>
        <strain>cv. Columbia</strain>
    </source>
</reference>
<reference key="4">
    <citation type="submission" date="2005-03" db="EMBL/GenBank/DDBJ databases">
        <title>Large-scale analysis of RIKEN Arabidopsis full-length (RAFL) cDNAs.</title>
        <authorList>
            <person name="Totoki Y."/>
            <person name="Seki M."/>
            <person name="Ishida J."/>
            <person name="Nakajima M."/>
            <person name="Enju A."/>
            <person name="Kamiya A."/>
            <person name="Narusaka M."/>
            <person name="Shin-i T."/>
            <person name="Nakagawa M."/>
            <person name="Sakamoto N."/>
            <person name="Oishi K."/>
            <person name="Kohara Y."/>
            <person name="Kobayashi M."/>
            <person name="Toyoda A."/>
            <person name="Sakaki Y."/>
            <person name="Sakurai T."/>
            <person name="Iida K."/>
            <person name="Akiyama K."/>
            <person name="Satou M."/>
            <person name="Toyoda T."/>
            <person name="Konagaya A."/>
            <person name="Carninci P."/>
            <person name="Kawai J."/>
            <person name="Hayashizaki Y."/>
            <person name="Shinozaki K."/>
        </authorList>
    </citation>
    <scope>NUCLEOTIDE SEQUENCE [LARGE SCALE MRNA] OF 452-552</scope>
    <source>
        <strain>cv. Columbia</strain>
    </source>
</reference>
<gene>
    <name type="ordered locus">At1g52310</name>
    <name type="ORF">F19K6.8</name>
</gene>
<accession>Q9C823</accession>
<accession>Q56ZM6</accession>
<sequence>MELKWVSCRKQSLFLISCLALLCLASLDTISCESTQNATDFKKRSQTVSCPPDWIIGPNQTKCYAYFKNSTSWEKSEMFCRTYGGHLASLASSKELSFVQKLCNGNVSSCWIGGRSMNSSTSGFRWSWSDPKTPQWNQSMFPKVPIRTRCGNGNGSSSCRANICIAVTNGSSSIFGERCNASHAFVCAVDSDIKCRNCHKYLVILAVVSGLILFTTFAIILWLLVYKRSKKRRKSRKVSNPASSSSVVPPSWKIFTSEELRSMTKNFSEANRLAGDAKTGGTYSGGLSDGTKVAVKRLKRSSFQRKKEFYSEIRRAAKLYHPNVVAIKGCCYDHGERFIVYEFIASGPLDRWLHHVPRGGRSLDWNMRLNIATTLAQGIAFLHDKVKPQVVHRDIRASNVLLDEEFGAHLMGVGLSKFVPWEVMQERTVMAGGTYGYLAPEYVYRNELTTKSDVYSFGVLLLEIVSGRRPTQAVNSSVGWQSIFEWATPLVQANRWLEILDPVITCGLPEACVVQKVVDLVYSCTQNVPSMRPRMSHVVHQLQQLVQPLEVK</sequence>
<name>Y1523_ARATH</name>
<dbReference type="EC" id="2.7.10.1"/>
<dbReference type="EMBL" id="AC037424">
    <property type="protein sequence ID" value="AAG51547.1"/>
    <property type="molecule type" value="Genomic_DNA"/>
</dbReference>
<dbReference type="EMBL" id="CP002684">
    <property type="protein sequence ID" value="AEE32780.1"/>
    <property type="molecule type" value="Genomic_DNA"/>
</dbReference>
<dbReference type="EMBL" id="AY062751">
    <property type="protein sequence ID" value="AAL32829.1"/>
    <property type="molecule type" value="mRNA"/>
</dbReference>
<dbReference type="EMBL" id="BT008903">
    <property type="protein sequence ID" value="AAP68342.1"/>
    <property type="molecule type" value="mRNA"/>
</dbReference>
<dbReference type="EMBL" id="AK220938">
    <property type="protein sequence ID" value="BAD94441.1"/>
    <property type="molecule type" value="mRNA"/>
</dbReference>
<dbReference type="PIR" id="C96563">
    <property type="entry name" value="C96563"/>
</dbReference>
<dbReference type="RefSeq" id="NP_175641.1">
    <property type="nucleotide sequence ID" value="NM_104110.3"/>
</dbReference>
<dbReference type="SMR" id="Q9C823"/>
<dbReference type="FunCoup" id="Q9C823">
    <property type="interactions" value="3011"/>
</dbReference>
<dbReference type="STRING" id="3702.Q9C823"/>
<dbReference type="GlyGen" id="Q9C823">
    <property type="glycosylation" value="9 sites"/>
</dbReference>
<dbReference type="iPTMnet" id="Q9C823"/>
<dbReference type="PaxDb" id="3702-AT1G52310.1"/>
<dbReference type="ProteomicsDB" id="242983"/>
<dbReference type="EnsemblPlants" id="AT1G52310.1">
    <property type="protein sequence ID" value="AT1G52310.1"/>
    <property type="gene ID" value="AT1G52310"/>
</dbReference>
<dbReference type="GeneID" id="841661"/>
<dbReference type="Gramene" id="AT1G52310.1">
    <property type="protein sequence ID" value="AT1G52310.1"/>
    <property type="gene ID" value="AT1G52310"/>
</dbReference>
<dbReference type="KEGG" id="ath:AT1G52310"/>
<dbReference type="Araport" id="AT1G52310"/>
<dbReference type="TAIR" id="AT1G52310"/>
<dbReference type="eggNOG" id="KOG1187">
    <property type="taxonomic scope" value="Eukaryota"/>
</dbReference>
<dbReference type="HOGENOM" id="CLU_000288_145_1_1"/>
<dbReference type="InParanoid" id="Q9C823"/>
<dbReference type="PhylomeDB" id="Q9C823"/>
<dbReference type="PRO" id="PR:Q9C823"/>
<dbReference type="Proteomes" id="UP000006548">
    <property type="component" value="Chromosome 1"/>
</dbReference>
<dbReference type="ExpressionAtlas" id="Q9C823">
    <property type="expression patterns" value="baseline and differential"/>
</dbReference>
<dbReference type="GO" id="GO:0005886">
    <property type="term" value="C:plasma membrane"/>
    <property type="evidence" value="ECO:0007669"/>
    <property type="project" value="UniProtKB-SubCell"/>
</dbReference>
<dbReference type="GO" id="GO:0005524">
    <property type="term" value="F:ATP binding"/>
    <property type="evidence" value="ECO:0007669"/>
    <property type="project" value="UniProtKB-KW"/>
</dbReference>
<dbReference type="GO" id="GO:0030246">
    <property type="term" value="F:carbohydrate binding"/>
    <property type="evidence" value="ECO:0007669"/>
    <property type="project" value="UniProtKB-KW"/>
</dbReference>
<dbReference type="GO" id="GO:0004714">
    <property type="term" value="F:transmembrane receptor protein tyrosine kinase activity"/>
    <property type="evidence" value="ECO:0007669"/>
    <property type="project" value="UniProtKB-EC"/>
</dbReference>
<dbReference type="FunFam" id="3.30.200.20:FF:000318">
    <property type="entry name" value="C-type lectin receptor-like tyrosine-protein kinase"/>
    <property type="match status" value="1"/>
</dbReference>
<dbReference type="FunFam" id="1.10.510.10:FF:000393">
    <property type="entry name" value="C-type lectin receptor-like tyrosine-protein kinase At1g52310"/>
    <property type="match status" value="1"/>
</dbReference>
<dbReference type="Gene3D" id="3.10.100.10">
    <property type="entry name" value="Mannose-Binding Protein A, subunit A"/>
    <property type="match status" value="1"/>
</dbReference>
<dbReference type="Gene3D" id="3.30.200.20">
    <property type="entry name" value="Phosphorylase Kinase, domain 1"/>
    <property type="match status" value="1"/>
</dbReference>
<dbReference type="Gene3D" id="1.10.510.10">
    <property type="entry name" value="Transferase(Phosphotransferase) domain 1"/>
    <property type="match status" value="1"/>
</dbReference>
<dbReference type="InterPro" id="IPR001304">
    <property type="entry name" value="C-type_lectin-like"/>
</dbReference>
<dbReference type="InterPro" id="IPR016186">
    <property type="entry name" value="C-type_lectin-like/link_sf"/>
</dbReference>
<dbReference type="InterPro" id="IPR052059">
    <property type="entry name" value="CR_Ser/Thr_kinase"/>
</dbReference>
<dbReference type="InterPro" id="IPR016187">
    <property type="entry name" value="CTDL_fold"/>
</dbReference>
<dbReference type="InterPro" id="IPR011009">
    <property type="entry name" value="Kinase-like_dom_sf"/>
</dbReference>
<dbReference type="InterPro" id="IPR000719">
    <property type="entry name" value="Prot_kinase_dom"/>
</dbReference>
<dbReference type="InterPro" id="IPR001245">
    <property type="entry name" value="Ser-Thr/Tyr_kinase_cat_dom"/>
</dbReference>
<dbReference type="InterPro" id="IPR008266">
    <property type="entry name" value="Tyr_kinase_AS"/>
</dbReference>
<dbReference type="InterPro" id="IPR020635">
    <property type="entry name" value="Tyr_kinase_cat_dom"/>
</dbReference>
<dbReference type="PANTHER" id="PTHR47973">
    <property type="entry name" value="CYSTEINE-RICH RECEPTOR-LIKE PROTEIN KINASE 3"/>
    <property type="match status" value="1"/>
</dbReference>
<dbReference type="Pfam" id="PF00059">
    <property type="entry name" value="Lectin_C"/>
    <property type="match status" value="1"/>
</dbReference>
<dbReference type="Pfam" id="PF07714">
    <property type="entry name" value="PK_Tyr_Ser-Thr"/>
    <property type="match status" value="1"/>
</dbReference>
<dbReference type="SMART" id="SM00034">
    <property type="entry name" value="CLECT"/>
    <property type="match status" value="1"/>
</dbReference>
<dbReference type="SMART" id="SM00220">
    <property type="entry name" value="S_TKc"/>
    <property type="match status" value="1"/>
</dbReference>
<dbReference type="SMART" id="SM00219">
    <property type="entry name" value="TyrKc"/>
    <property type="match status" value="1"/>
</dbReference>
<dbReference type="SUPFAM" id="SSF56436">
    <property type="entry name" value="C-type lectin-like"/>
    <property type="match status" value="1"/>
</dbReference>
<dbReference type="SUPFAM" id="SSF56112">
    <property type="entry name" value="Protein kinase-like (PK-like)"/>
    <property type="match status" value="1"/>
</dbReference>
<dbReference type="PROSITE" id="PS50041">
    <property type="entry name" value="C_TYPE_LECTIN_2"/>
    <property type="match status" value="1"/>
</dbReference>
<dbReference type="PROSITE" id="PS50011">
    <property type="entry name" value="PROTEIN_KINASE_DOM"/>
    <property type="match status" value="1"/>
</dbReference>
<dbReference type="PROSITE" id="PS00109">
    <property type="entry name" value="PROTEIN_KINASE_TYR"/>
    <property type="match status" value="1"/>
</dbReference>
<organism>
    <name type="scientific">Arabidopsis thaliana</name>
    <name type="common">Mouse-ear cress</name>
    <dbReference type="NCBI Taxonomy" id="3702"/>
    <lineage>
        <taxon>Eukaryota</taxon>
        <taxon>Viridiplantae</taxon>
        <taxon>Streptophyta</taxon>
        <taxon>Embryophyta</taxon>
        <taxon>Tracheophyta</taxon>
        <taxon>Spermatophyta</taxon>
        <taxon>Magnoliopsida</taxon>
        <taxon>eudicotyledons</taxon>
        <taxon>Gunneridae</taxon>
        <taxon>Pentapetalae</taxon>
        <taxon>rosids</taxon>
        <taxon>malvids</taxon>
        <taxon>Brassicales</taxon>
        <taxon>Brassicaceae</taxon>
        <taxon>Camelineae</taxon>
        <taxon>Arabidopsis</taxon>
    </lineage>
</organism>
<evidence type="ECO:0000250" key="1"/>
<evidence type="ECO:0000255" key="2"/>
<evidence type="ECO:0000255" key="3">
    <source>
        <dbReference type="PROSITE-ProRule" id="PRU00040"/>
    </source>
</evidence>
<evidence type="ECO:0000255" key="4">
    <source>
        <dbReference type="PROSITE-ProRule" id="PRU00159"/>
    </source>
</evidence>
<evidence type="ECO:0000255" key="5">
    <source>
        <dbReference type="PROSITE-ProRule" id="PRU10028"/>
    </source>
</evidence>
<keyword id="KW-0067">ATP-binding</keyword>
<keyword id="KW-1003">Cell membrane</keyword>
<keyword id="KW-1015">Disulfide bond</keyword>
<keyword id="KW-0325">Glycoprotein</keyword>
<keyword id="KW-0418">Kinase</keyword>
<keyword id="KW-0430">Lectin</keyword>
<keyword id="KW-0472">Membrane</keyword>
<keyword id="KW-0547">Nucleotide-binding</keyword>
<keyword id="KW-0675">Receptor</keyword>
<keyword id="KW-1185">Reference proteome</keyword>
<keyword id="KW-0732">Signal</keyword>
<keyword id="KW-0808">Transferase</keyword>
<keyword id="KW-0812">Transmembrane</keyword>
<keyword id="KW-1133">Transmembrane helix</keyword>
<keyword id="KW-0829">Tyrosine-protein kinase</keyword>
<proteinExistence type="evidence at transcript level"/>
<protein>
    <recommendedName>
        <fullName>C-type lectin receptor-like tyrosine-protein kinase At1g52310</fullName>
        <ecNumber>2.7.10.1</ecNumber>
    </recommendedName>
</protein>